<proteinExistence type="evidence at protein level"/>
<comment type="function">
    <text evidence="2">Adapter protein required for Golgi and endoplasmic reticulum biogenesis. Involved in Golgi and endoplasmic reticulum maintenance during interphase and in their reassembly at the end of mitosis. The complex formed with VCP has membrane fusion activity; membrane fusion activity requires USO1-GOLGA2 tethering and BET1L. VCPIP1 is also required, but not its deubiquitinating activity. Together with NSFL1C/p47, regulates the centrosomal levels of kinase AURKA/Aurora A during mitotic progression by promoting AURKA removal from centrosomes in prophase. Also, regulates spindle orientation during mitosis.</text>
</comment>
<comment type="subunit">
    <text evidence="6">Interacts with VCP. Does not bind ubiquitin.</text>
</comment>
<comment type="subcellular location">
    <subcellularLocation>
        <location evidence="1">Nucleus</location>
    </subcellularLocation>
    <subcellularLocation>
        <location evidence="1">Cytoplasm</location>
        <location evidence="1">Cytosol</location>
    </subcellularLocation>
    <subcellularLocation>
        <location evidence="1">Endoplasmic reticulum</location>
    </subcellularLocation>
    <subcellularLocation>
        <location evidence="1">Golgi apparatus</location>
    </subcellularLocation>
    <subcellularLocation>
        <location evidence="7">Cytoplasm</location>
        <location evidence="7">Cytoskeleton</location>
        <location evidence="7">Microtubule organizing center</location>
        <location evidence="7">Centrosome</location>
    </subcellularLocation>
    <text evidence="7">Localizes to centrosome during mitotic prophase and metaphase.</text>
</comment>
<comment type="similarity">
    <text evidence="8">Belongs to the NSFL1C family.</text>
</comment>
<protein>
    <recommendedName>
        <fullName>UBX domain-containing protein 2B</fullName>
    </recommendedName>
    <alternativeName>
        <fullName>NSFL1 cofactor p37</fullName>
    </alternativeName>
    <alternativeName>
        <fullName>p97 cofactor p37</fullName>
    </alternativeName>
</protein>
<dbReference type="EMBL" id="AB120715">
    <property type="protein sequence ID" value="BAF30880.1"/>
    <property type="molecule type" value="mRNA"/>
</dbReference>
<dbReference type="EMBL" id="AK012822">
    <property type="protein sequence ID" value="BAB28494.1"/>
    <property type="molecule type" value="mRNA"/>
</dbReference>
<dbReference type="EMBL" id="AK028268">
    <property type="protein sequence ID" value="BAC25851.1"/>
    <property type="molecule type" value="mRNA"/>
</dbReference>
<dbReference type="EMBL" id="AK032332">
    <property type="protein sequence ID" value="BAC27819.1"/>
    <property type="molecule type" value="mRNA"/>
</dbReference>
<dbReference type="EMBL" id="AK049018">
    <property type="protein sequence ID" value="BAC33515.1"/>
    <property type="molecule type" value="mRNA"/>
</dbReference>
<dbReference type="EMBL" id="AL772385">
    <property type="status" value="NOT_ANNOTATED_CDS"/>
    <property type="molecule type" value="Genomic_DNA"/>
</dbReference>
<dbReference type="EMBL" id="BC076632">
    <property type="protein sequence ID" value="AAH76632.1"/>
    <property type="molecule type" value="mRNA"/>
</dbReference>
<dbReference type="CCDS" id="CCDS17949.1"/>
<dbReference type="RefSeq" id="NP_080810.2">
    <property type="nucleotide sequence ID" value="NM_026534.2"/>
</dbReference>
<dbReference type="SMR" id="Q0KL01"/>
<dbReference type="BioGRID" id="212631">
    <property type="interactions" value="12"/>
</dbReference>
<dbReference type="FunCoup" id="Q0KL01">
    <property type="interactions" value="3556"/>
</dbReference>
<dbReference type="IntAct" id="Q0KL01">
    <property type="interactions" value="1"/>
</dbReference>
<dbReference type="MINT" id="Q0KL01"/>
<dbReference type="STRING" id="10090.ENSMUSP00000029907"/>
<dbReference type="iPTMnet" id="Q0KL01"/>
<dbReference type="PhosphoSitePlus" id="Q0KL01"/>
<dbReference type="PaxDb" id="10090-ENSMUSP00000029907"/>
<dbReference type="PeptideAtlas" id="Q0KL01"/>
<dbReference type="ProteomicsDB" id="298426"/>
<dbReference type="Antibodypedia" id="51502">
    <property type="antibodies" value="177 antibodies from 13 providers"/>
</dbReference>
<dbReference type="DNASU" id="68053"/>
<dbReference type="Ensembl" id="ENSMUST00000029907.6">
    <property type="protein sequence ID" value="ENSMUSP00000029907.6"/>
    <property type="gene ID" value="ENSMUSG00000028243.6"/>
</dbReference>
<dbReference type="GeneID" id="68053"/>
<dbReference type="KEGG" id="mmu:68053"/>
<dbReference type="UCSC" id="uc008rxj.1">
    <property type="organism name" value="mouse"/>
</dbReference>
<dbReference type="AGR" id="MGI:1915303"/>
<dbReference type="CTD" id="137886"/>
<dbReference type="MGI" id="MGI:1915303">
    <property type="gene designation" value="Ubxn2b"/>
</dbReference>
<dbReference type="VEuPathDB" id="HostDB:ENSMUSG00000028243"/>
<dbReference type="eggNOG" id="KOG2086">
    <property type="taxonomic scope" value="Eukaryota"/>
</dbReference>
<dbReference type="GeneTree" id="ENSGT00520000055567"/>
<dbReference type="HOGENOM" id="CLU_029402_0_0_1"/>
<dbReference type="InParanoid" id="Q0KL01"/>
<dbReference type="OMA" id="REVLHCN"/>
<dbReference type="OrthoDB" id="25887at2759"/>
<dbReference type="PhylomeDB" id="Q0KL01"/>
<dbReference type="TreeFam" id="TF312973"/>
<dbReference type="BioGRID-ORCS" id="68053">
    <property type="hits" value="1 hit in 77 CRISPR screens"/>
</dbReference>
<dbReference type="ChiTaRS" id="Ubxn2b">
    <property type="organism name" value="mouse"/>
</dbReference>
<dbReference type="PRO" id="PR:Q0KL01"/>
<dbReference type="Proteomes" id="UP000000589">
    <property type="component" value="Chromosome 4"/>
</dbReference>
<dbReference type="RNAct" id="Q0KL01">
    <property type="molecule type" value="protein"/>
</dbReference>
<dbReference type="Bgee" id="ENSMUSG00000028243">
    <property type="expression patterns" value="Expressed in otic placode and 235 other cell types or tissues"/>
</dbReference>
<dbReference type="GO" id="GO:0005829">
    <property type="term" value="C:cytosol"/>
    <property type="evidence" value="ECO:0007669"/>
    <property type="project" value="UniProtKB-SubCell"/>
</dbReference>
<dbReference type="GO" id="GO:0005783">
    <property type="term" value="C:endoplasmic reticulum"/>
    <property type="evidence" value="ECO:0007669"/>
    <property type="project" value="UniProtKB-SubCell"/>
</dbReference>
<dbReference type="GO" id="GO:0005794">
    <property type="term" value="C:Golgi apparatus"/>
    <property type="evidence" value="ECO:0007669"/>
    <property type="project" value="UniProtKB-SubCell"/>
</dbReference>
<dbReference type="GO" id="GO:0005634">
    <property type="term" value="C:nucleus"/>
    <property type="evidence" value="ECO:0007669"/>
    <property type="project" value="UniProtKB-SubCell"/>
</dbReference>
<dbReference type="GO" id="GO:0031616">
    <property type="term" value="C:spindle pole centrosome"/>
    <property type="evidence" value="ECO:0000314"/>
    <property type="project" value="UniProtKB"/>
</dbReference>
<dbReference type="GO" id="GO:0000132">
    <property type="term" value="P:establishment of mitotic spindle orientation"/>
    <property type="evidence" value="ECO:0007669"/>
    <property type="project" value="Ensembl"/>
</dbReference>
<dbReference type="GO" id="GO:1904780">
    <property type="term" value="P:negative regulation of protein localization to centrosome"/>
    <property type="evidence" value="ECO:0007669"/>
    <property type="project" value="Ensembl"/>
</dbReference>
<dbReference type="GO" id="GO:0046604">
    <property type="term" value="P:positive regulation of mitotic centrosome separation"/>
    <property type="evidence" value="ECO:0007669"/>
    <property type="project" value="Ensembl"/>
</dbReference>
<dbReference type="FunFam" id="3.30.420.210:FF:000001">
    <property type="entry name" value="NSFL1 (P97) cofactor (P47)"/>
    <property type="match status" value="1"/>
</dbReference>
<dbReference type="FunFam" id="3.10.20.90:FF:000135">
    <property type="entry name" value="UBX domain-containing protein 2B"/>
    <property type="match status" value="1"/>
</dbReference>
<dbReference type="Gene3D" id="3.10.20.90">
    <property type="entry name" value="Phosphatidylinositol 3-kinase Catalytic Subunit, Chain A, domain 1"/>
    <property type="match status" value="1"/>
</dbReference>
<dbReference type="Gene3D" id="3.30.420.210">
    <property type="entry name" value="SEP domain"/>
    <property type="match status" value="1"/>
</dbReference>
<dbReference type="InterPro" id="IPR036241">
    <property type="entry name" value="NSFL1C_SEP_dom_sf"/>
</dbReference>
<dbReference type="InterPro" id="IPR012989">
    <property type="entry name" value="SEP_domain"/>
</dbReference>
<dbReference type="InterPro" id="IPR029071">
    <property type="entry name" value="Ubiquitin-like_domsf"/>
</dbReference>
<dbReference type="InterPro" id="IPR001012">
    <property type="entry name" value="UBX_dom"/>
</dbReference>
<dbReference type="PANTHER" id="PTHR23333">
    <property type="entry name" value="UBX DOMAIN CONTAINING PROTEIN"/>
    <property type="match status" value="1"/>
</dbReference>
<dbReference type="PANTHER" id="PTHR23333:SF14">
    <property type="entry name" value="UBX DOMAIN-CONTAINING PROTEIN 2B"/>
    <property type="match status" value="1"/>
</dbReference>
<dbReference type="Pfam" id="PF08059">
    <property type="entry name" value="SEP"/>
    <property type="match status" value="1"/>
</dbReference>
<dbReference type="Pfam" id="PF00789">
    <property type="entry name" value="UBX"/>
    <property type="match status" value="1"/>
</dbReference>
<dbReference type="SMART" id="SM00553">
    <property type="entry name" value="SEP"/>
    <property type="match status" value="1"/>
</dbReference>
<dbReference type="SMART" id="SM00166">
    <property type="entry name" value="UBX"/>
    <property type="match status" value="1"/>
</dbReference>
<dbReference type="SUPFAM" id="SSF102848">
    <property type="entry name" value="NSFL1 (p97 ATPase) cofactor p47, SEP domain"/>
    <property type="match status" value="1"/>
</dbReference>
<dbReference type="SUPFAM" id="SSF54236">
    <property type="entry name" value="Ubiquitin-like"/>
    <property type="match status" value="1"/>
</dbReference>
<dbReference type="PROSITE" id="PS51399">
    <property type="entry name" value="SEP"/>
    <property type="match status" value="1"/>
</dbReference>
<dbReference type="PROSITE" id="PS50033">
    <property type="entry name" value="UBX"/>
    <property type="match status" value="1"/>
</dbReference>
<gene>
    <name type="primary">Ubxn2b</name>
</gene>
<accession>Q0KL01</accession>
<accession>Q8BGY8</accession>
<accession>Q8CCQ0</accession>
<accession>Q9CZA8</accession>
<organism>
    <name type="scientific">Mus musculus</name>
    <name type="common">Mouse</name>
    <dbReference type="NCBI Taxonomy" id="10090"/>
    <lineage>
        <taxon>Eukaryota</taxon>
        <taxon>Metazoa</taxon>
        <taxon>Chordata</taxon>
        <taxon>Craniata</taxon>
        <taxon>Vertebrata</taxon>
        <taxon>Euteleostomi</taxon>
        <taxon>Mammalia</taxon>
        <taxon>Eutheria</taxon>
        <taxon>Euarchontoglires</taxon>
        <taxon>Glires</taxon>
        <taxon>Rodentia</taxon>
        <taxon>Myomorpha</taxon>
        <taxon>Muroidea</taxon>
        <taxon>Muridae</taxon>
        <taxon>Murinae</taxon>
        <taxon>Mus</taxon>
        <taxon>Mus</taxon>
    </lineage>
</organism>
<sequence>MAEGGRAEPEEQERGSSRPRPPSARDLQLALAELYEDEMKCKSSKPDRSTPATCRSPRTPPHRLYSGDHKYDGLHIVQPPTGKIVNELFKEAREHGAVPLNEATRSSREDKTKSFTGGGYRLGNSFYKRSEYIYGENQLQDVQVLLKLWRNGFSLDDGELRPYSDPTNAQFLESVKRGETPLELQRLVHGAQVNLDMEDHQDQEYIKPRLRFKAFSGEGQKLGSLTPEIVSTPSSPEEEDKSILNAAVLIDDSMPTTKIQIRLADGSRLVQRFNSTHRILDVRDFIVRSRPEFATTDFILVTSFPSKELTDETVTLQEADILNTVILQQLK</sequence>
<feature type="initiator methionine" description="Removed" evidence="2">
    <location>
        <position position="1"/>
    </location>
</feature>
<feature type="chain" id="PRO_0000315229" description="UBX domain-containing protein 2B">
    <location>
        <begin position="2"/>
        <end position="331"/>
    </location>
</feature>
<feature type="domain" description="SEP" evidence="4">
    <location>
        <begin position="141"/>
        <end position="206"/>
    </location>
</feature>
<feature type="domain" description="UBX" evidence="3">
    <location>
        <begin position="252"/>
        <end position="329"/>
    </location>
</feature>
<feature type="region of interest" description="Disordered" evidence="5">
    <location>
        <begin position="1"/>
        <end position="70"/>
    </location>
</feature>
<feature type="compositionally biased region" description="Basic and acidic residues" evidence="5">
    <location>
        <begin position="1"/>
        <end position="16"/>
    </location>
</feature>
<feature type="compositionally biased region" description="Basic and acidic residues" evidence="5">
    <location>
        <begin position="37"/>
        <end position="48"/>
    </location>
</feature>
<feature type="modified residue" description="N-acetylalanine" evidence="2">
    <location>
        <position position="2"/>
    </location>
</feature>
<feature type="modified residue" description="Phosphoserine" evidence="2">
    <location>
        <position position="56"/>
    </location>
</feature>
<feature type="modified residue" description="Phosphothreonine" evidence="2">
    <location>
        <position position="59"/>
    </location>
</feature>
<feature type="modified residue" description="Phosphoserine" evidence="2">
    <location>
        <position position="66"/>
    </location>
</feature>
<feature type="modified residue" description="Phosphoserine" evidence="2">
    <location>
        <position position="231"/>
    </location>
</feature>
<feature type="modified residue" description="Phosphoserine" evidence="1">
    <location>
        <position position="234"/>
    </location>
</feature>
<feature type="modified residue" description="Phosphoserine" evidence="2">
    <location>
        <position position="235"/>
    </location>
</feature>
<feature type="sequence conflict" description="In Ref. 2; BAB28494." evidence="8" ref="2">
    <original>E</original>
    <variation>K</variation>
    <location>
        <position position="8"/>
    </location>
</feature>
<feature type="sequence conflict" description="In Ref. 2; BAC27819." evidence="8" ref="2">
    <original>S</original>
    <variation>N</variation>
    <location>
        <position position="23"/>
    </location>
</feature>
<feature type="sequence conflict" description="In Ref. 1; BAF30880." evidence="8" ref="1">
    <original>S</original>
    <variation>N</variation>
    <location>
        <position position="164"/>
    </location>
</feature>
<keyword id="KW-0007">Acetylation</keyword>
<keyword id="KW-0963">Cytoplasm</keyword>
<keyword id="KW-0206">Cytoskeleton</keyword>
<keyword id="KW-0256">Endoplasmic reticulum</keyword>
<keyword id="KW-0333">Golgi apparatus</keyword>
<keyword id="KW-0539">Nucleus</keyword>
<keyword id="KW-0597">Phosphoprotein</keyword>
<keyword id="KW-1185">Reference proteome</keyword>
<name>UBX2B_MOUSE</name>
<reference key="1">
    <citation type="journal article" date="2006" name="Dev. Cell">
        <title>p37 is a p97 adaptor required for Golgi and ER biogenesis in interphase and at the end of mitosis.</title>
        <authorList>
            <person name="Uchiyama K."/>
            <person name="Totsukawa G."/>
            <person name="Puhka M."/>
            <person name="Kaneko Y."/>
            <person name="Jokitalo E."/>
            <person name="Dreveny I."/>
            <person name="Beuron F."/>
            <person name="Zhang X."/>
            <person name="Freemont P."/>
            <person name="Kondo H."/>
        </authorList>
    </citation>
    <scope>NUCLEOTIDE SEQUENCE [MRNA]</scope>
    <scope>INTERACTION WITH VCP</scope>
</reference>
<reference key="2">
    <citation type="journal article" date="2005" name="Science">
        <title>The transcriptional landscape of the mammalian genome.</title>
        <authorList>
            <person name="Carninci P."/>
            <person name="Kasukawa T."/>
            <person name="Katayama S."/>
            <person name="Gough J."/>
            <person name="Frith M.C."/>
            <person name="Maeda N."/>
            <person name="Oyama R."/>
            <person name="Ravasi T."/>
            <person name="Lenhard B."/>
            <person name="Wells C."/>
            <person name="Kodzius R."/>
            <person name="Shimokawa K."/>
            <person name="Bajic V.B."/>
            <person name="Brenner S.E."/>
            <person name="Batalov S."/>
            <person name="Forrest A.R."/>
            <person name="Zavolan M."/>
            <person name="Davis M.J."/>
            <person name="Wilming L.G."/>
            <person name="Aidinis V."/>
            <person name="Allen J.E."/>
            <person name="Ambesi-Impiombato A."/>
            <person name="Apweiler R."/>
            <person name="Aturaliya R.N."/>
            <person name="Bailey T.L."/>
            <person name="Bansal M."/>
            <person name="Baxter L."/>
            <person name="Beisel K.W."/>
            <person name="Bersano T."/>
            <person name="Bono H."/>
            <person name="Chalk A.M."/>
            <person name="Chiu K.P."/>
            <person name="Choudhary V."/>
            <person name="Christoffels A."/>
            <person name="Clutterbuck D.R."/>
            <person name="Crowe M.L."/>
            <person name="Dalla E."/>
            <person name="Dalrymple B.P."/>
            <person name="de Bono B."/>
            <person name="Della Gatta G."/>
            <person name="di Bernardo D."/>
            <person name="Down T."/>
            <person name="Engstrom P."/>
            <person name="Fagiolini M."/>
            <person name="Faulkner G."/>
            <person name="Fletcher C.F."/>
            <person name="Fukushima T."/>
            <person name="Furuno M."/>
            <person name="Futaki S."/>
            <person name="Gariboldi M."/>
            <person name="Georgii-Hemming P."/>
            <person name="Gingeras T.R."/>
            <person name="Gojobori T."/>
            <person name="Green R.E."/>
            <person name="Gustincich S."/>
            <person name="Harbers M."/>
            <person name="Hayashi Y."/>
            <person name="Hensch T.K."/>
            <person name="Hirokawa N."/>
            <person name="Hill D."/>
            <person name="Huminiecki L."/>
            <person name="Iacono M."/>
            <person name="Ikeo K."/>
            <person name="Iwama A."/>
            <person name="Ishikawa T."/>
            <person name="Jakt M."/>
            <person name="Kanapin A."/>
            <person name="Katoh M."/>
            <person name="Kawasawa Y."/>
            <person name="Kelso J."/>
            <person name="Kitamura H."/>
            <person name="Kitano H."/>
            <person name="Kollias G."/>
            <person name="Krishnan S.P."/>
            <person name="Kruger A."/>
            <person name="Kummerfeld S.K."/>
            <person name="Kurochkin I.V."/>
            <person name="Lareau L.F."/>
            <person name="Lazarevic D."/>
            <person name="Lipovich L."/>
            <person name="Liu J."/>
            <person name="Liuni S."/>
            <person name="McWilliam S."/>
            <person name="Madan Babu M."/>
            <person name="Madera M."/>
            <person name="Marchionni L."/>
            <person name="Matsuda H."/>
            <person name="Matsuzawa S."/>
            <person name="Miki H."/>
            <person name="Mignone F."/>
            <person name="Miyake S."/>
            <person name="Morris K."/>
            <person name="Mottagui-Tabar S."/>
            <person name="Mulder N."/>
            <person name="Nakano N."/>
            <person name="Nakauchi H."/>
            <person name="Ng P."/>
            <person name="Nilsson R."/>
            <person name="Nishiguchi S."/>
            <person name="Nishikawa S."/>
            <person name="Nori F."/>
            <person name="Ohara O."/>
            <person name="Okazaki Y."/>
            <person name="Orlando V."/>
            <person name="Pang K.C."/>
            <person name="Pavan W.J."/>
            <person name="Pavesi G."/>
            <person name="Pesole G."/>
            <person name="Petrovsky N."/>
            <person name="Piazza S."/>
            <person name="Reed J."/>
            <person name="Reid J.F."/>
            <person name="Ring B.Z."/>
            <person name="Ringwald M."/>
            <person name="Rost B."/>
            <person name="Ruan Y."/>
            <person name="Salzberg S.L."/>
            <person name="Sandelin A."/>
            <person name="Schneider C."/>
            <person name="Schoenbach C."/>
            <person name="Sekiguchi K."/>
            <person name="Semple C.A."/>
            <person name="Seno S."/>
            <person name="Sessa L."/>
            <person name="Sheng Y."/>
            <person name="Shibata Y."/>
            <person name="Shimada H."/>
            <person name="Shimada K."/>
            <person name="Silva D."/>
            <person name="Sinclair B."/>
            <person name="Sperling S."/>
            <person name="Stupka E."/>
            <person name="Sugiura K."/>
            <person name="Sultana R."/>
            <person name="Takenaka Y."/>
            <person name="Taki K."/>
            <person name="Tammoja K."/>
            <person name="Tan S.L."/>
            <person name="Tang S."/>
            <person name="Taylor M.S."/>
            <person name="Tegner J."/>
            <person name="Teichmann S.A."/>
            <person name="Ueda H.R."/>
            <person name="van Nimwegen E."/>
            <person name="Verardo R."/>
            <person name="Wei C.L."/>
            <person name="Yagi K."/>
            <person name="Yamanishi H."/>
            <person name="Zabarovsky E."/>
            <person name="Zhu S."/>
            <person name="Zimmer A."/>
            <person name="Hide W."/>
            <person name="Bult C."/>
            <person name="Grimmond S.M."/>
            <person name="Teasdale R.D."/>
            <person name="Liu E.T."/>
            <person name="Brusic V."/>
            <person name="Quackenbush J."/>
            <person name="Wahlestedt C."/>
            <person name="Mattick J.S."/>
            <person name="Hume D.A."/>
            <person name="Kai C."/>
            <person name="Sasaki D."/>
            <person name="Tomaru Y."/>
            <person name="Fukuda S."/>
            <person name="Kanamori-Katayama M."/>
            <person name="Suzuki M."/>
            <person name="Aoki J."/>
            <person name="Arakawa T."/>
            <person name="Iida J."/>
            <person name="Imamura K."/>
            <person name="Itoh M."/>
            <person name="Kato T."/>
            <person name="Kawaji H."/>
            <person name="Kawagashira N."/>
            <person name="Kawashima T."/>
            <person name="Kojima M."/>
            <person name="Kondo S."/>
            <person name="Konno H."/>
            <person name="Nakano K."/>
            <person name="Ninomiya N."/>
            <person name="Nishio T."/>
            <person name="Okada M."/>
            <person name="Plessy C."/>
            <person name="Shibata K."/>
            <person name="Shiraki T."/>
            <person name="Suzuki S."/>
            <person name="Tagami M."/>
            <person name="Waki K."/>
            <person name="Watahiki A."/>
            <person name="Okamura-Oho Y."/>
            <person name="Suzuki H."/>
            <person name="Kawai J."/>
            <person name="Hayashizaki Y."/>
        </authorList>
    </citation>
    <scope>NUCLEOTIDE SEQUENCE [LARGE SCALE MRNA]</scope>
    <source>
        <strain>C57BL/6J</strain>
        <tissue>Cerebellum</tissue>
        <tissue>Head</tissue>
        <tissue>Olfactory bulb</tissue>
    </source>
</reference>
<reference key="3">
    <citation type="journal article" date="2009" name="PLoS Biol.">
        <title>Lineage-specific biology revealed by a finished genome assembly of the mouse.</title>
        <authorList>
            <person name="Church D.M."/>
            <person name="Goodstadt L."/>
            <person name="Hillier L.W."/>
            <person name="Zody M.C."/>
            <person name="Goldstein S."/>
            <person name="She X."/>
            <person name="Bult C.J."/>
            <person name="Agarwala R."/>
            <person name="Cherry J.L."/>
            <person name="DiCuccio M."/>
            <person name="Hlavina W."/>
            <person name="Kapustin Y."/>
            <person name="Meric P."/>
            <person name="Maglott D."/>
            <person name="Birtle Z."/>
            <person name="Marques A.C."/>
            <person name="Graves T."/>
            <person name="Zhou S."/>
            <person name="Teague B."/>
            <person name="Potamousis K."/>
            <person name="Churas C."/>
            <person name="Place M."/>
            <person name="Herschleb J."/>
            <person name="Runnheim R."/>
            <person name="Forrest D."/>
            <person name="Amos-Landgraf J."/>
            <person name="Schwartz D.C."/>
            <person name="Cheng Z."/>
            <person name="Lindblad-Toh K."/>
            <person name="Eichler E.E."/>
            <person name="Ponting C.P."/>
        </authorList>
    </citation>
    <scope>NUCLEOTIDE SEQUENCE [LARGE SCALE GENOMIC DNA]</scope>
    <source>
        <strain>C57BL/6J</strain>
    </source>
</reference>
<reference key="4">
    <citation type="journal article" date="2004" name="Genome Res.">
        <title>The status, quality, and expansion of the NIH full-length cDNA project: the Mammalian Gene Collection (MGC).</title>
        <authorList>
            <consortium name="The MGC Project Team"/>
        </authorList>
    </citation>
    <scope>NUCLEOTIDE SEQUENCE [LARGE SCALE MRNA]</scope>
    <source>
        <strain>C57BL/6J</strain>
        <tissue>Head</tissue>
    </source>
</reference>
<reference key="5">
    <citation type="journal article" date="2004" name="Mol. Cell. Proteomics">
        <title>Phosphoproteomic analysis of the developing mouse brain.</title>
        <authorList>
            <person name="Ballif B.A."/>
            <person name="Villen J."/>
            <person name="Beausoleil S.A."/>
            <person name="Schwartz D."/>
            <person name="Gygi S.P."/>
        </authorList>
    </citation>
    <scope>IDENTIFICATION BY MASS SPECTROMETRY [LARGE SCALE ANALYSIS]</scope>
    <source>
        <tissue>Embryonic brain</tissue>
    </source>
</reference>
<reference key="6">
    <citation type="journal article" date="2013" name="J. Cell Biol.">
        <title>The UBXN-2/p37/p47 adaptors of CDC-48/p97 regulate mitosis by limiting the centrosomal recruitment of Aurora A.</title>
        <authorList>
            <person name="Kress E."/>
            <person name="Schwager F."/>
            <person name="Holtackers R."/>
            <person name="Seiler J."/>
            <person name="Prodon F."/>
            <person name="Zanin E."/>
            <person name="Eiteneuer A."/>
            <person name="Toya M."/>
            <person name="Sugimoto A."/>
            <person name="Meyer H."/>
            <person name="Meraldi P."/>
            <person name="Gotta M."/>
        </authorList>
    </citation>
    <scope>SUBCELLULAR LOCATION</scope>
</reference>
<evidence type="ECO:0000250" key="1">
    <source>
        <dbReference type="UniProtKB" id="P0C627"/>
    </source>
</evidence>
<evidence type="ECO:0000250" key="2">
    <source>
        <dbReference type="UniProtKB" id="Q14CS0"/>
    </source>
</evidence>
<evidence type="ECO:0000255" key="3">
    <source>
        <dbReference type="PROSITE-ProRule" id="PRU00215"/>
    </source>
</evidence>
<evidence type="ECO:0000255" key="4">
    <source>
        <dbReference type="PROSITE-ProRule" id="PRU00732"/>
    </source>
</evidence>
<evidence type="ECO:0000256" key="5">
    <source>
        <dbReference type="SAM" id="MobiDB-lite"/>
    </source>
</evidence>
<evidence type="ECO:0000269" key="6">
    <source>
    </source>
</evidence>
<evidence type="ECO:0000269" key="7">
    <source>
    </source>
</evidence>
<evidence type="ECO:0000305" key="8"/>